<keyword id="KW-0507">mRNA processing</keyword>
<keyword id="KW-0508">mRNA splicing</keyword>
<keyword id="KW-0539">Nucleus</keyword>
<keyword id="KW-1185">Reference proteome</keyword>
<keyword id="KW-0747">Spliceosome</keyword>
<reference key="1">
    <citation type="journal article" date="2005" name="Nature">
        <title>Sequencing of Aspergillus nidulans and comparative analysis with A. fumigatus and A. oryzae.</title>
        <authorList>
            <person name="Galagan J.E."/>
            <person name="Calvo S.E."/>
            <person name="Cuomo C."/>
            <person name="Ma L.-J."/>
            <person name="Wortman J.R."/>
            <person name="Batzoglou S."/>
            <person name="Lee S.-I."/>
            <person name="Bastuerkmen M."/>
            <person name="Spevak C.C."/>
            <person name="Clutterbuck J."/>
            <person name="Kapitonov V."/>
            <person name="Jurka J."/>
            <person name="Scazzocchio C."/>
            <person name="Farman M.L."/>
            <person name="Butler J."/>
            <person name="Purcell S."/>
            <person name="Harris S."/>
            <person name="Braus G.H."/>
            <person name="Draht O."/>
            <person name="Busch S."/>
            <person name="D'Enfert C."/>
            <person name="Bouchier C."/>
            <person name="Goldman G.H."/>
            <person name="Bell-Pedersen D."/>
            <person name="Griffiths-Jones S."/>
            <person name="Doonan J.H."/>
            <person name="Yu J."/>
            <person name="Vienken K."/>
            <person name="Pain A."/>
            <person name="Freitag M."/>
            <person name="Selker E.U."/>
            <person name="Archer D.B."/>
            <person name="Penalva M.A."/>
            <person name="Oakley B.R."/>
            <person name="Momany M."/>
            <person name="Tanaka T."/>
            <person name="Kumagai T."/>
            <person name="Asai K."/>
            <person name="Machida M."/>
            <person name="Nierman W.C."/>
            <person name="Denning D.W."/>
            <person name="Caddick M.X."/>
            <person name="Hynes M."/>
            <person name="Paoletti M."/>
            <person name="Fischer R."/>
            <person name="Miller B.L."/>
            <person name="Dyer P.S."/>
            <person name="Sachs M.S."/>
            <person name="Osmani S.A."/>
            <person name="Birren B.W."/>
        </authorList>
    </citation>
    <scope>NUCLEOTIDE SEQUENCE [LARGE SCALE GENOMIC DNA]</scope>
    <source>
        <strain>FGSC A4 / ATCC 38163 / CBS 112.46 / NRRL 194 / M139</strain>
    </source>
</reference>
<reference key="2">
    <citation type="journal article" date="2009" name="Fungal Genet. Biol.">
        <title>The 2008 update of the Aspergillus nidulans genome annotation: a community effort.</title>
        <authorList>
            <person name="Wortman J.R."/>
            <person name="Gilsenan J.M."/>
            <person name="Joardar V."/>
            <person name="Deegan J."/>
            <person name="Clutterbuck J."/>
            <person name="Andersen M.R."/>
            <person name="Archer D."/>
            <person name="Bencina M."/>
            <person name="Braus G."/>
            <person name="Coutinho P."/>
            <person name="von Dohren H."/>
            <person name="Doonan J."/>
            <person name="Driessen A.J."/>
            <person name="Durek P."/>
            <person name="Espeso E."/>
            <person name="Fekete E."/>
            <person name="Flipphi M."/>
            <person name="Estrada C.G."/>
            <person name="Geysens S."/>
            <person name="Goldman G."/>
            <person name="de Groot P.W."/>
            <person name="Hansen K."/>
            <person name="Harris S.D."/>
            <person name="Heinekamp T."/>
            <person name="Helmstaedt K."/>
            <person name="Henrissat B."/>
            <person name="Hofmann G."/>
            <person name="Homan T."/>
            <person name="Horio T."/>
            <person name="Horiuchi H."/>
            <person name="James S."/>
            <person name="Jones M."/>
            <person name="Karaffa L."/>
            <person name="Karanyi Z."/>
            <person name="Kato M."/>
            <person name="Keller N."/>
            <person name="Kelly D.E."/>
            <person name="Kiel J.A."/>
            <person name="Kim J.M."/>
            <person name="van der Klei I.J."/>
            <person name="Klis F.M."/>
            <person name="Kovalchuk A."/>
            <person name="Krasevec N."/>
            <person name="Kubicek C.P."/>
            <person name="Liu B."/>
            <person name="Maccabe A."/>
            <person name="Meyer V."/>
            <person name="Mirabito P."/>
            <person name="Miskei M."/>
            <person name="Mos M."/>
            <person name="Mullins J."/>
            <person name="Nelson D.R."/>
            <person name="Nielsen J."/>
            <person name="Oakley B.R."/>
            <person name="Osmani S.A."/>
            <person name="Pakula T."/>
            <person name="Paszewski A."/>
            <person name="Paulsen I."/>
            <person name="Pilsyk S."/>
            <person name="Pocsi I."/>
            <person name="Punt P.J."/>
            <person name="Ram A.F."/>
            <person name="Ren Q."/>
            <person name="Robellet X."/>
            <person name="Robson G."/>
            <person name="Seiboth B."/>
            <person name="van Solingen P."/>
            <person name="Specht T."/>
            <person name="Sun J."/>
            <person name="Taheri-Talesh N."/>
            <person name="Takeshita N."/>
            <person name="Ussery D."/>
            <person name="vanKuyk P.A."/>
            <person name="Visser H."/>
            <person name="van de Vondervoort P.J."/>
            <person name="de Vries R.P."/>
            <person name="Walton J."/>
            <person name="Xiang X."/>
            <person name="Xiong Y."/>
            <person name="Zeng A.P."/>
            <person name="Brandt B.W."/>
            <person name="Cornell M.J."/>
            <person name="van den Hondel C.A."/>
            <person name="Visser J."/>
            <person name="Oliver S.G."/>
            <person name="Turner G."/>
        </authorList>
    </citation>
    <scope>GENOME REANNOTATION</scope>
    <source>
        <strain>FGSC A4 / ATCC 38163 / CBS 112.46 / NRRL 194 / M139</strain>
    </source>
</reference>
<accession>Q5B1X8</accession>
<accession>C8VGG8</accession>
<gene>
    <name type="primary">rse1</name>
    <name type="ORF">AN5452</name>
</gene>
<sequence length="1209" mass="133003">MATTSHMFMYSLTIQPPTAITQAILGQFAGTKEQQIVTASGSKLTIHRPDPTQGKVIPLYTQDVFGIIRTLAAFRLAGSNKDYIIIGSDSGRITIIEYVPSQNRFNRIHLETFGKSGVRRVVPGQYLAVDPKGRACLIASVEKNKLVYVLNRNSQAELTISSPLEAHKPQTLVYSVVALDAGYENPVFAALEVDYSESDQDPTGRAYEEVEKLLVYYELDLGLNHVVRKWTDPVDRTSSMLFQVPGGADGPSGVLVCAEDNITYRHSNQDAFRVPIPRRKGAMENPERKRCITAGVMHKMRGAFFFLLQTEDGDLFKLTLDMVEDDKGQLTGEVKGLKIKYFDTVPLASSLLILKSGFLYVAAEGGNHHFYQFEKLGDDDEETEFNSDDFSADPAAPCTPVYFQPRGAENLNLVEAINSLNPLVDSKVVNISEDDAPQIFTVSGTGARSTFRTLKHGLEVSEIVESELPSVPSAVWTTKLTRADEFDAYIVLSFANGTLVLSIGETVEEVTDTGFLSSAPTLAVQQLGEDSLIQIHPRGIRHILADRRVNEWPAPQHRSIVAAATNERQVAVALSSGEIVYFELDADGSLAEYDERRQMSGTVTCLSLGEVPEGRVRSSFLAVGCDDSTVRILSLDPDTTLENKSVQALTAAPSALNIIAMADSSSGGTTLYLHIGLHSGVYLRTALDEVTGELSDTRTRFLGSKAVKLFQVSVTGQTAVLALSSRPWLGYSDTQTKGFMLTPLDYVGLEWGWNFSSEQCVEGMVGIQGQNLRIFSIEKLDNNMLQQSIPLAYTPRHFIKHPEEPLFYVIEADNNVLSPATRARLLEDSKARGGDTTVLPPEDFGYPRGTGHWASCIQIIDPLDAKAVVGAVELEENEAAVSIAAVPFTSQDDETFLVVGTAKDMTVNPPSSAGGYIHIYRFQEDGKELEFIHKTKVEEPPLALLGFQGRLLAGVGSVLRIYDLGMKQLLRKCQAAVAPKAIVGLQTQGSRIVVSDVRESVTYVVYKYQDNVLIPFVDDSIARWTTAATMVDYETTAGGDKFGNLWLVRCPKKASEEADEEGSGAHLIHDRGYLQGTPNRLELMIHVFTQDIPTSLHKTQLVAGGRDILVWTGFQGTIGILVPFVSREDVDFFQSLEMQLASQCPPLAGRDHLIYRSYYAPVKGVIDGDLCEQYFLLSNDTKMMIAAELDRSVREIERKISDMRTRVAY</sequence>
<evidence type="ECO:0000250" key="1"/>
<evidence type="ECO:0000305" key="2"/>
<feature type="chain" id="PRO_0000218631" description="Pre-mRNA-splicing factor rse1">
    <location>
        <begin position="1"/>
        <end position="1209"/>
    </location>
</feature>
<protein>
    <recommendedName>
        <fullName>Pre-mRNA-splicing factor rse1</fullName>
    </recommendedName>
</protein>
<name>RSE1_EMENI</name>
<comment type="function">
    <text evidence="1">Involved in pre-mRNA splicing and cell cycle control.</text>
</comment>
<comment type="subunit">
    <text evidence="1">Associated with the spliceosome.</text>
</comment>
<comment type="subcellular location">
    <subcellularLocation>
        <location evidence="1">Nucleus</location>
    </subcellularLocation>
</comment>
<comment type="similarity">
    <text evidence="2">Belongs to the RSE1 family.</text>
</comment>
<comment type="sequence caution" evidence="2">
    <conflict type="erroneous gene model prediction">
        <sequence resource="EMBL-CDS" id="EAA62612"/>
    </conflict>
</comment>
<proteinExistence type="inferred from homology"/>
<organism>
    <name type="scientific">Emericella nidulans (strain FGSC A4 / ATCC 38163 / CBS 112.46 / NRRL 194 / M139)</name>
    <name type="common">Aspergillus nidulans</name>
    <dbReference type="NCBI Taxonomy" id="227321"/>
    <lineage>
        <taxon>Eukaryota</taxon>
        <taxon>Fungi</taxon>
        <taxon>Dikarya</taxon>
        <taxon>Ascomycota</taxon>
        <taxon>Pezizomycotina</taxon>
        <taxon>Eurotiomycetes</taxon>
        <taxon>Eurotiomycetidae</taxon>
        <taxon>Eurotiales</taxon>
        <taxon>Aspergillaceae</taxon>
        <taxon>Aspergillus</taxon>
        <taxon>Aspergillus subgen. Nidulantes</taxon>
    </lineage>
</organism>
<dbReference type="EMBL" id="AACD01000094">
    <property type="protein sequence ID" value="EAA62612.1"/>
    <property type="status" value="ALT_SEQ"/>
    <property type="molecule type" value="Genomic_DNA"/>
</dbReference>
<dbReference type="EMBL" id="BN001305">
    <property type="protein sequence ID" value="CBF81885.1"/>
    <property type="molecule type" value="Genomic_DNA"/>
</dbReference>
<dbReference type="RefSeq" id="XP_663056.1">
    <property type="nucleotide sequence ID" value="XM_657964.1"/>
</dbReference>
<dbReference type="SMR" id="Q5B1X8"/>
<dbReference type="FunCoup" id="Q5B1X8">
    <property type="interactions" value="1277"/>
</dbReference>
<dbReference type="STRING" id="227321.Q5B1X8"/>
<dbReference type="EnsemblFungi" id="CBF81885">
    <property type="protein sequence ID" value="CBF81885"/>
    <property type="gene ID" value="ANIA_05452"/>
</dbReference>
<dbReference type="VEuPathDB" id="FungiDB:AN5452"/>
<dbReference type="eggNOG" id="KOG1898">
    <property type="taxonomic scope" value="Eukaryota"/>
</dbReference>
<dbReference type="HOGENOM" id="CLU_003246_0_0_1"/>
<dbReference type="InParanoid" id="Q5B1X8"/>
<dbReference type="OMA" id="PRATGHW"/>
<dbReference type="OrthoDB" id="436637at2759"/>
<dbReference type="Proteomes" id="UP000000560">
    <property type="component" value="Chromosome V"/>
</dbReference>
<dbReference type="GO" id="GO:0005634">
    <property type="term" value="C:nucleus"/>
    <property type="evidence" value="ECO:0000318"/>
    <property type="project" value="GO_Central"/>
</dbReference>
<dbReference type="GO" id="GO:0005681">
    <property type="term" value="C:spliceosomal complex"/>
    <property type="evidence" value="ECO:0007669"/>
    <property type="project" value="UniProtKB-KW"/>
</dbReference>
<dbReference type="GO" id="GO:0005686">
    <property type="term" value="C:U2 snRNP"/>
    <property type="evidence" value="ECO:0000318"/>
    <property type="project" value="GO_Central"/>
</dbReference>
<dbReference type="GO" id="GO:0030620">
    <property type="term" value="F:U2 snRNA binding"/>
    <property type="evidence" value="ECO:0000318"/>
    <property type="project" value="GO_Central"/>
</dbReference>
<dbReference type="GO" id="GO:0000398">
    <property type="term" value="P:mRNA splicing, via spliceosome"/>
    <property type="evidence" value="ECO:0000318"/>
    <property type="project" value="GO_Central"/>
</dbReference>
<dbReference type="FunFam" id="2.130.10.10:FF:001143">
    <property type="entry name" value="Pre-mRNA-splicing factor rse-1, putative"/>
    <property type="match status" value="1"/>
</dbReference>
<dbReference type="FunFam" id="2.130.10.10:FF:000068">
    <property type="entry name" value="Pre-mRNA-splicing factor rse1, variant"/>
    <property type="match status" value="1"/>
</dbReference>
<dbReference type="Gene3D" id="2.130.10.10">
    <property type="entry name" value="YVTN repeat-like/Quinoprotein amine dehydrogenase"/>
    <property type="match status" value="3"/>
</dbReference>
<dbReference type="InterPro" id="IPR018846">
    <property type="entry name" value="Beta-prop_RSE1/DDB1/CPSF1_1st"/>
</dbReference>
<dbReference type="InterPro" id="IPR004871">
    <property type="entry name" value="Cleavage/polyA-sp_fac_asu_C"/>
</dbReference>
<dbReference type="InterPro" id="IPR011044">
    <property type="entry name" value="Quino_amine_DH_bsu"/>
</dbReference>
<dbReference type="InterPro" id="IPR050358">
    <property type="entry name" value="RSE1/DDB1/CFT1/CPSF1"/>
</dbReference>
<dbReference type="InterPro" id="IPR015943">
    <property type="entry name" value="WD40/YVTN_repeat-like_dom_sf"/>
</dbReference>
<dbReference type="InterPro" id="IPR036322">
    <property type="entry name" value="WD40_repeat_dom_sf"/>
</dbReference>
<dbReference type="PANTHER" id="PTHR10644">
    <property type="entry name" value="DNA REPAIR/RNA PROCESSING CPSF FAMILY"/>
    <property type="match status" value="1"/>
</dbReference>
<dbReference type="Pfam" id="PF10433">
    <property type="entry name" value="Beta-prop_RSE1_1st"/>
    <property type="match status" value="1"/>
</dbReference>
<dbReference type="Pfam" id="PF23726">
    <property type="entry name" value="Beta-prop_RSE1_2nd"/>
    <property type="match status" value="1"/>
</dbReference>
<dbReference type="Pfam" id="PF03178">
    <property type="entry name" value="CPSF_A"/>
    <property type="match status" value="1"/>
</dbReference>
<dbReference type="SUPFAM" id="SSF50978">
    <property type="entry name" value="WD40 repeat-like"/>
    <property type="match status" value="1"/>
</dbReference>
<dbReference type="SUPFAM" id="SSF50969">
    <property type="entry name" value="YVTN repeat-like/Quinoprotein amine dehydrogenase"/>
    <property type="match status" value="1"/>
</dbReference>